<comment type="function">
    <text evidence="1 2">Plays a role in peptidoglycan recycling by cleaving the terminal beta-1,4-linked N-acetylglucosamine (GlcNAc) from peptide-linked peptidoglycan fragments, giving rise to free GlcNAc, anhydro-N-acetylmuramic acid and anhydro-N-acetylmuramic acid-linked peptides (By similarity). Contributes to intrinsic fosfomycin resistance in P.aeruginosa (PubMed:24819062).</text>
</comment>
<comment type="catalytic activity">
    <reaction evidence="1">
        <text>Hydrolysis of terminal non-reducing N-acetyl-D-hexosamine residues in N-acetyl-beta-D-hexosaminides.</text>
        <dbReference type="EC" id="3.2.1.52"/>
    </reaction>
</comment>
<comment type="pathway">
    <text evidence="1 3">Cell wall biogenesis; peptidoglycan recycling.</text>
</comment>
<comment type="subunit">
    <text evidence="1">Monomer.</text>
</comment>
<comment type="subcellular location">
    <subcellularLocation>
        <location evidence="1">Cytoplasm</location>
    </subcellularLocation>
</comment>
<comment type="disruption phenotype">
    <text evidence="2">Deletion of this gene increases fosfomycin sensitivity.</text>
</comment>
<comment type="similarity">
    <text evidence="1">Belongs to the glycosyl hydrolase 3 family. NagZ subfamily.</text>
</comment>
<evidence type="ECO:0000255" key="1">
    <source>
        <dbReference type="HAMAP-Rule" id="MF_00364"/>
    </source>
</evidence>
<evidence type="ECO:0000269" key="2">
    <source>
    </source>
</evidence>
<evidence type="ECO:0000305" key="3">
    <source>
    </source>
</evidence>
<evidence type="ECO:0007829" key="4">
    <source>
        <dbReference type="PDB" id="5G1M"/>
    </source>
</evidence>
<evidence type="ECO:0007829" key="5">
    <source>
        <dbReference type="PDB" id="5G3R"/>
    </source>
</evidence>
<evidence type="ECO:0007829" key="6">
    <source>
        <dbReference type="PDB" id="5G5K"/>
    </source>
</evidence>
<evidence type="ECO:0007829" key="7">
    <source>
        <dbReference type="PDB" id="5G6T"/>
    </source>
</evidence>
<evidence type="ECO:0007829" key="8">
    <source>
        <dbReference type="PDB" id="5LY7"/>
    </source>
</evidence>
<organism>
    <name type="scientific">Pseudomonas aeruginosa (strain ATCC 15692 / DSM 22644 / CIP 104116 / JCM 14847 / LMG 12228 / 1C / PRS 101 / PAO1)</name>
    <dbReference type="NCBI Taxonomy" id="208964"/>
    <lineage>
        <taxon>Bacteria</taxon>
        <taxon>Pseudomonadati</taxon>
        <taxon>Pseudomonadota</taxon>
        <taxon>Gammaproteobacteria</taxon>
        <taxon>Pseudomonadales</taxon>
        <taxon>Pseudomonadaceae</taxon>
        <taxon>Pseudomonas</taxon>
    </lineage>
</organism>
<accession>Q9HZK0</accession>
<gene>
    <name evidence="1" type="primary">nagZ</name>
    <name type="ordered locus">PA3005</name>
</gene>
<dbReference type="EC" id="3.2.1.52" evidence="1"/>
<dbReference type="EMBL" id="AE004091">
    <property type="protein sequence ID" value="AAG06393.1"/>
    <property type="molecule type" value="Genomic_DNA"/>
</dbReference>
<dbReference type="PIR" id="G83270">
    <property type="entry name" value="G83270"/>
</dbReference>
<dbReference type="RefSeq" id="NP_251695.1">
    <property type="nucleotide sequence ID" value="NC_002516.2"/>
</dbReference>
<dbReference type="RefSeq" id="WP_003118092.1">
    <property type="nucleotide sequence ID" value="NZ_QZGE01000009.1"/>
</dbReference>
<dbReference type="PDB" id="5G1M">
    <property type="method" value="X-ray"/>
    <property type="resolution" value="1.80 A"/>
    <property type="chains" value="A/B=1-332"/>
</dbReference>
<dbReference type="PDB" id="5G2M">
    <property type="method" value="X-ray"/>
    <property type="resolution" value="3.00 A"/>
    <property type="chains" value="A/B=1-332"/>
</dbReference>
<dbReference type="PDB" id="5G3R">
    <property type="method" value="X-ray"/>
    <property type="resolution" value="2.18 A"/>
    <property type="chains" value="A/B=1-332"/>
</dbReference>
<dbReference type="PDB" id="5G5K">
    <property type="method" value="X-ray"/>
    <property type="resolution" value="3.10 A"/>
    <property type="chains" value="A/B=1-332"/>
</dbReference>
<dbReference type="PDB" id="5G5U">
    <property type="method" value="X-ray"/>
    <property type="resolution" value="2.25 A"/>
    <property type="chains" value="A/B=1-332"/>
</dbReference>
<dbReference type="PDB" id="5G6T">
    <property type="method" value="X-ray"/>
    <property type="resolution" value="2.15 A"/>
    <property type="chains" value="A/B=1-332"/>
</dbReference>
<dbReference type="PDB" id="5LY7">
    <property type="method" value="X-ray"/>
    <property type="resolution" value="3.10 A"/>
    <property type="chains" value="A/B=1-332"/>
</dbReference>
<dbReference type="PDBsum" id="5G1M"/>
<dbReference type="PDBsum" id="5G2M"/>
<dbReference type="PDBsum" id="5G3R"/>
<dbReference type="PDBsum" id="5G5K"/>
<dbReference type="PDBsum" id="5G5U"/>
<dbReference type="PDBsum" id="5G6T"/>
<dbReference type="PDBsum" id="5LY7"/>
<dbReference type="SMR" id="Q9HZK0"/>
<dbReference type="FunCoup" id="Q9HZK0">
    <property type="interactions" value="364"/>
</dbReference>
<dbReference type="STRING" id="208964.PA3005"/>
<dbReference type="BindingDB" id="Q9HZK0"/>
<dbReference type="ChEMBL" id="CHEMBL1667674"/>
<dbReference type="CAZy" id="GH3">
    <property type="family name" value="Glycoside Hydrolase Family 3"/>
</dbReference>
<dbReference type="PaxDb" id="208964-PA3005"/>
<dbReference type="GeneID" id="880216"/>
<dbReference type="KEGG" id="pae:PA3005"/>
<dbReference type="PATRIC" id="fig|208964.12.peg.3153"/>
<dbReference type="PseudoCAP" id="PA3005"/>
<dbReference type="HOGENOM" id="CLU_008392_0_0_6"/>
<dbReference type="InParanoid" id="Q9HZK0"/>
<dbReference type="OrthoDB" id="9786661at2"/>
<dbReference type="PhylomeDB" id="Q9HZK0"/>
<dbReference type="BioCyc" id="MetaCyc:MONOMER-20216"/>
<dbReference type="BioCyc" id="PAER208964:G1FZ6-3057-MONOMER"/>
<dbReference type="UniPathway" id="UPA00544"/>
<dbReference type="PHI-base" id="PHI:123476"/>
<dbReference type="PRO" id="PR:Q9HZK0"/>
<dbReference type="Proteomes" id="UP000002438">
    <property type="component" value="Chromosome"/>
</dbReference>
<dbReference type="GO" id="GO:0005829">
    <property type="term" value="C:cytosol"/>
    <property type="evidence" value="ECO:0000318"/>
    <property type="project" value="GO_Central"/>
</dbReference>
<dbReference type="GO" id="GO:0016231">
    <property type="term" value="F:beta-N-acetylglucosaminidase activity"/>
    <property type="evidence" value="ECO:0000318"/>
    <property type="project" value="GO_Central"/>
</dbReference>
<dbReference type="GO" id="GO:0005975">
    <property type="term" value="P:carbohydrate metabolic process"/>
    <property type="evidence" value="ECO:0007669"/>
    <property type="project" value="InterPro"/>
</dbReference>
<dbReference type="GO" id="GO:0051301">
    <property type="term" value="P:cell division"/>
    <property type="evidence" value="ECO:0007669"/>
    <property type="project" value="UniProtKB-KW"/>
</dbReference>
<dbReference type="GO" id="GO:0071555">
    <property type="term" value="P:cell wall organization"/>
    <property type="evidence" value="ECO:0007669"/>
    <property type="project" value="UniProtKB-KW"/>
</dbReference>
<dbReference type="GO" id="GO:0009252">
    <property type="term" value="P:peptidoglycan biosynthetic process"/>
    <property type="evidence" value="ECO:0007669"/>
    <property type="project" value="UniProtKB-KW"/>
</dbReference>
<dbReference type="GO" id="GO:0009254">
    <property type="term" value="P:peptidoglycan turnover"/>
    <property type="evidence" value="ECO:0000318"/>
    <property type="project" value="GO_Central"/>
</dbReference>
<dbReference type="GO" id="GO:0008360">
    <property type="term" value="P:regulation of cell shape"/>
    <property type="evidence" value="ECO:0007669"/>
    <property type="project" value="UniProtKB-KW"/>
</dbReference>
<dbReference type="GO" id="GO:0046677">
    <property type="term" value="P:response to antibiotic"/>
    <property type="evidence" value="ECO:0007669"/>
    <property type="project" value="UniProtKB-KW"/>
</dbReference>
<dbReference type="FunFam" id="3.20.20.300:FF:000001">
    <property type="entry name" value="Beta-hexosaminidase"/>
    <property type="match status" value="1"/>
</dbReference>
<dbReference type="Gene3D" id="3.20.20.300">
    <property type="entry name" value="Glycoside hydrolase, family 3, N-terminal domain"/>
    <property type="match status" value="1"/>
</dbReference>
<dbReference type="HAMAP" id="MF_00364">
    <property type="entry name" value="NagZ"/>
    <property type="match status" value="1"/>
</dbReference>
<dbReference type="InterPro" id="IPR022956">
    <property type="entry name" value="Beta_hexosaminidase_bac"/>
</dbReference>
<dbReference type="InterPro" id="IPR019800">
    <property type="entry name" value="Glyco_hydro_3_AS"/>
</dbReference>
<dbReference type="InterPro" id="IPR001764">
    <property type="entry name" value="Glyco_hydro_3_N"/>
</dbReference>
<dbReference type="InterPro" id="IPR036962">
    <property type="entry name" value="Glyco_hydro_3_N_sf"/>
</dbReference>
<dbReference type="InterPro" id="IPR017853">
    <property type="entry name" value="Glycoside_hydrolase_SF"/>
</dbReference>
<dbReference type="InterPro" id="IPR050226">
    <property type="entry name" value="NagZ_Beta-hexosaminidase"/>
</dbReference>
<dbReference type="NCBIfam" id="NF003740">
    <property type="entry name" value="PRK05337.1"/>
    <property type="match status" value="1"/>
</dbReference>
<dbReference type="PANTHER" id="PTHR30480:SF13">
    <property type="entry name" value="BETA-HEXOSAMINIDASE"/>
    <property type="match status" value="1"/>
</dbReference>
<dbReference type="PANTHER" id="PTHR30480">
    <property type="entry name" value="BETA-HEXOSAMINIDASE-RELATED"/>
    <property type="match status" value="1"/>
</dbReference>
<dbReference type="Pfam" id="PF00933">
    <property type="entry name" value="Glyco_hydro_3"/>
    <property type="match status" value="1"/>
</dbReference>
<dbReference type="SUPFAM" id="SSF51445">
    <property type="entry name" value="(Trans)glycosidases"/>
    <property type="match status" value="1"/>
</dbReference>
<dbReference type="PROSITE" id="PS00775">
    <property type="entry name" value="GLYCOSYL_HYDROL_F3"/>
    <property type="match status" value="1"/>
</dbReference>
<name>NAGZ_PSEAE</name>
<proteinExistence type="evidence at protein level"/>
<protein>
    <recommendedName>
        <fullName evidence="1">Beta-hexosaminidase</fullName>
        <ecNumber evidence="1">3.2.1.52</ecNumber>
    </recommendedName>
    <alternativeName>
        <fullName evidence="1">Beta-N-acetylhexosaminidase</fullName>
    </alternativeName>
    <alternativeName>
        <fullName evidence="1">N-acetyl-beta-glucosaminidase</fullName>
    </alternativeName>
</protein>
<reference key="1">
    <citation type="journal article" date="2000" name="Nature">
        <title>Complete genome sequence of Pseudomonas aeruginosa PAO1, an opportunistic pathogen.</title>
        <authorList>
            <person name="Stover C.K."/>
            <person name="Pham X.-Q.T."/>
            <person name="Erwin A.L."/>
            <person name="Mizoguchi S.D."/>
            <person name="Warrener P."/>
            <person name="Hickey M.J."/>
            <person name="Brinkman F.S.L."/>
            <person name="Hufnagle W.O."/>
            <person name="Kowalik D.J."/>
            <person name="Lagrou M."/>
            <person name="Garber R.L."/>
            <person name="Goltry L."/>
            <person name="Tolentino E."/>
            <person name="Westbrock-Wadman S."/>
            <person name="Yuan Y."/>
            <person name="Brody L.L."/>
            <person name="Coulter S.N."/>
            <person name="Folger K.R."/>
            <person name="Kas A."/>
            <person name="Larbig K."/>
            <person name="Lim R.M."/>
            <person name="Smith K.A."/>
            <person name="Spencer D.H."/>
            <person name="Wong G.K.-S."/>
            <person name="Wu Z."/>
            <person name="Paulsen I.T."/>
            <person name="Reizer J."/>
            <person name="Saier M.H. Jr."/>
            <person name="Hancock R.E.W."/>
            <person name="Lory S."/>
            <person name="Olson M.V."/>
        </authorList>
    </citation>
    <scope>NUCLEOTIDE SEQUENCE [LARGE SCALE GENOMIC DNA]</scope>
    <source>
        <strain>ATCC 15692 / DSM 22644 / CIP 104116 / JCM 14847 / LMG 12228 / 1C / PRS 101 / PAO1</strain>
    </source>
</reference>
<reference key="2">
    <citation type="journal article" date="2014" name="Microb. Drug Resist.">
        <title>Blocking peptidoglycan recycling in Pseudomonas aeruginosa attenuates intrinsic resistance to fosfomycin.</title>
        <authorList>
            <person name="Borisova M."/>
            <person name="Gisin J."/>
            <person name="Mayer C."/>
        </authorList>
    </citation>
    <scope>FUNCTION</scope>
    <scope>DISRUPTION PHENOTYPE</scope>
    <scope>PATHWAY</scope>
    <source>
        <strain>ATCC 15692 / DSM 22644 / CIP 104116 / JCM 14847 / LMG 12228 / 1C / PRS 101 / PAO1</strain>
    </source>
</reference>
<keyword id="KW-0002">3D-structure</keyword>
<keyword id="KW-0046">Antibiotic resistance</keyword>
<keyword id="KW-0131">Cell cycle</keyword>
<keyword id="KW-0132">Cell division</keyword>
<keyword id="KW-0133">Cell shape</keyword>
<keyword id="KW-0961">Cell wall biogenesis/degradation</keyword>
<keyword id="KW-0963">Cytoplasm</keyword>
<keyword id="KW-0326">Glycosidase</keyword>
<keyword id="KW-0378">Hydrolase</keyword>
<keyword id="KW-0573">Peptidoglycan synthesis</keyword>
<keyword id="KW-1185">Reference proteome</keyword>
<feature type="chain" id="PRO_0000210795" description="Beta-hexosaminidase">
    <location>
        <begin position="1"/>
        <end position="332"/>
    </location>
</feature>
<feature type="active site" description="Proton donor/acceptor" evidence="1">
    <location>
        <position position="174"/>
    </location>
</feature>
<feature type="active site" description="Nucleophile" evidence="1">
    <location>
        <position position="244"/>
    </location>
</feature>
<feature type="binding site" evidence="1">
    <location>
        <position position="62"/>
    </location>
    <ligand>
        <name>substrate</name>
    </ligand>
</feature>
<feature type="binding site" evidence="1">
    <location>
        <position position="70"/>
    </location>
    <ligand>
        <name>substrate</name>
    </ligand>
</feature>
<feature type="binding site" evidence="1">
    <location>
        <position position="131"/>
    </location>
    <ligand>
        <name>substrate</name>
    </ligand>
</feature>
<feature type="binding site" evidence="1">
    <location>
        <begin position="161"/>
        <end position="162"/>
    </location>
    <ligand>
        <name>substrate</name>
    </ligand>
</feature>
<feature type="site" description="Important for catalytic activity" evidence="1">
    <location>
        <position position="172"/>
    </location>
</feature>
<feature type="strand" evidence="4">
    <location>
        <begin position="4"/>
        <end position="7"/>
    </location>
</feature>
<feature type="strand" evidence="4">
    <location>
        <begin position="10"/>
        <end position="13"/>
    </location>
</feature>
<feature type="helix" evidence="4">
    <location>
        <begin position="16"/>
        <end position="22"/>
    </location>
</feature>
<feature type="strand" evidence="4">
    <location>
        <begin position="27"/>
        <end position="32"/>
    </location>
</feature>
<feature type="helix" evidence="4">
    <location>
        <begin position="34"/>
        <end position="36"/>
    </location>
</feature>
<feature type="helix" evidence="4">
    <location>
        <begin position="40"/>
        <end position="53"/>
    </location>
</feature>
<feature type="strand" evidence="4">
    <location>
        <begin position="58"/>
        <end position="61"/>
    </location>
</feature>
<feature type="turn" evidence="4">
    <location>
        <begin position="64"/>
        <end position="66"/>
    </location>
</feature>
<feature type="helix" evidence="4">
    <location>
        <begin position="67"/>
        <end position="71"/>
    </location>
</feature>
<feature type="helix" evidence="4">
    <location>
        <begin position="81"/>
        <end position="85"/>
    </location>
</feature>
<feature type="strand" evidence="6">
    <location>
        <begin position="86"/>
        <end position="88"/>
    </location>
</feature>
<feature type="helix" evidence="4">
    <location>
        <begin position="90"/>
        <end position="107"/>
    </location>
</feature>
<feature type="strand" evidence="4">
    <location>
        <begin position="111"/>
        <end position="113"/>
    </location>
</feature>
<feature type="helix" evidence="7">
    <location>
        <begin position="116"/>
        <end position="118"/>
    </location>
</feature>
<feature type="turn" evidence="5">
    <location>
        <begin position="126"/>
        <end position="128"/>
    </location>
</feature>
<feature type="turn" evidence="4">
    <location>
        <begin position="131"/>
        <end position="133"/>
    </location>
</feature>
<feature type="helix" evidence="4">
    <location>
        <begin position="137"/>
        <end position="153"/>
    </location>
</feature>
<feature type="strand" evidence="4">
    <location>
        <begin position="159"/>
        <end position="163"/>
    </location>
</feature>
<feature type="strand" evidence="5">
    <location>
        <begin position="166"/>
        <end position="169"/>
    </location>
</feature>
<feature type="strand" evidence="4">
    <location>
        <begin position="173"/>
        <end position="176"/>
    </location>
</feature>
<feature type="helix" evidence="4">
    <location>
        <begin position="184"/>
        <end position="189"/>
    </location>
</feature>
<feature type="turn" evidence="4">
    <location>
        <begin position="190"/>
        <end position="192"/>
    </location>
</feature>
<feature type="helix" evidence="4">
    <location>
        <begin position="193"/>
        <end position="198"/>
    </location>
</feature>
<feature type="turn" evidence="4">
    <location>
        <begin position="199"/>
        <end position="201"/>
    </location>
</feature>
<feature type="strand" evidence="4">
    <location>
        <begin position="203"/>
        <end position="207"/>
    </location>
</feature>
<feature type="turn" evidence="4">
    <location>
        <begin position="213"/>
        <end position="215"/>
    </location>
</feature>
<feature type="strand" evidence="4">
    <location>
        <begin position="216"/>
        <end position="219"/>
    </location>
</feature>
<feature type="helix" evidence="4">
    <location>
        <begin position="220"/>
        <end position="222"/>
    </location>
</feature>
<feature type="helix" evidence="4">
    <location>
        <begin position="224"/>
        <end position="227"/>
    </location>
</feature>
<feature type="helix" evidence="4">
    <location>
        <begin position="228"/>
        <end position="234"/>
    </location>
</feature>
<feature type="strand" evidence="4">
    <location>
        <begin position="239"/>
        <end position="245"/>
    </location>
</feature>
<feature type="strand" evidence="4">
    <location>
        <begin position="249"/>
        <end position="251"/>
    </location>
</feature>
<feature type="turn" evidence="8">
    <location>
        <begin position="252"/>
        <end position="254"/>
    </location>
</feature>
<feature type="helix" evidence="4">
    <location>
        <begin position="257"/>
        <end position="267"/>
    </location>
</feature>
<feature type="strand" evidence="4">
    <location>
        <begin position="270"/>
        <end position="273"/>
    </location>
</feature>
<feature type="helix" evidence="4">
    <location>
        <begin position="278"/>
        <end position="290"/>
    </location>
</feature>
<feature type="helix" evidence="4">
    <location>
        <begin position="299"/>
        <end position="302"/>
    </location>
</feature>
<feature type="helix" evidence="4">
    <location>
        <begin position="312"/>
        <end position="314"/>
    </location>
</feature>
<feature type="helix" evidence="4">
    <location>
        <begin position="316"/>
        <end position="327"/>
    </location>
</feature>
<sequence length="332" mass="36101">MQGSLMLDIGGTWLTAEDRQILRHPEVGGLIIFARNIEHPAQVRELCAAIRAIRPDLLLAVDQEGGRVQRLRQGFVRLPAMRAIADNPNAEELAEHCGWLMATEVQAVGLDLSFAPVLDLDHQRSAVVGSRAFEGDPERAALLAGAFIRGMHAAGMAATGKHFPGHGWAEADSHVAIPEDARSLEEIRRSDLVPFARLAGQLDALMPAHVIYPQVDPQPAGFSRRWLQEILRGELKFDGVIFSDDLSMAGAHVVGDAASRIEAALAAGCDMGLVCNDRASAELALAALQRLKVTPPSRLQRMRGKGYANTDYRQQPRWLEALSALRAAQLID</sequence>